<sequence>MSRSLRKGPFVDHHLLKKVRDMNALEKKTPIKTWSRRSMITPEMIGHTFEVHNGRKFLTVFVSETMVGHKLGEFSPTRMFKSHPVKKG</sequence>
<keyword id="KW-0687">Ribonucleoprotein</keyword>
<keyword id="KW-0689">Ribosomal protein</keyword>
<keyword id="KW-0694">RNA-binding</keyword>
<keyword id="KW-0699">rRNA-binding</keyword>
<organism>
    <name type="scientific">Chlamydia trachomatis serovar L2 (strain ATCC VR-902B / DSM 19102 / 434/Bu)</name>
    <dbReference type="NCBI Taxonomy" id="471472"/>
    <lineage>
        <taxon>Bacteria</taxon>
        <taxon>Pseudomonadati</taxon>
        <taxon>Chlamydiota</taxon>
        <taxon>Chlamydiia</taxon>
        <taxon>Chlamydiales</taxon>
        <taxon>Chlamydiaceae</taxon>
        <taxon>Chlamydia/Chlamydophila group</taxon>
        <taxon>Chlamydia</taxon>
    </lineage>
</organism>
<evidence type="ECO:0000255" key="1">
    <source>
        <dbReference type="HAMAP-Rule" id="MF_00531"/>
    </source>
</evidence>
<evidence type="ECO:0000305" key="2"/>
<accession>B0B898</accession>
<comment type="function">
    <text evidence="1">Protein S19 forms a complex with S13 that binds strongly to the 16S ribosomal RNA.</text>
</comment>
<comment type="similarity">
    <text evidence="1">Belongs to the universal ribosomal protein uS19 family.</text>
</comment>
<gene>
    <name evidence="1" type="primary">rpsS</name>
    <name type="ordered locus">CTL0786</name>
</gene>
<protein>
    <recommendedName>
        <fullName evidence="1">Small ribosomal subunit protein uS19</fullName>
    </recommendedName>
    <alternativeName>
        <fullName evidence="2">30S ribosomal protein S19</fullName>
    </alternativeName>
</protein>
<reference key="1">
    <citation type="journal article" date="2008" name="Genome Res.">
        <title>Chlamydia trachomatis: genome sequence analysis of lymphogranuloma venereum isolates.</title>
        <authorList>
            <person name="Thomson N.R."/>
            <person name="Holden M.T.G."/>
            <person name="Carder C."/>
            <person name="Lennard N."/>
            <person name="Lockey S.J."/>
            <person name="Marsh P."/>
            <person name="Skipp P."/>
            <person name="O'Connor C.D."/>
            <person name="Goodhead I."/>
            <person name="Norbertzcak H."/>
            <person name="Harris B."/>
            <person name="Ormond D."/>
            <person name="Rance R."/>
            <person name="Quail M.A."/>
            <person name="Parkhill J."/>
            <person name="Stephens R.S."/>
            <person name="Clarke I.N."/>
        </authorList>
    </citation>
    <scope>NUCLEOTIDE SEQUENCE [LARGE SCALE GENOMIC DNA]</scope>
    <source>
        <strain>ATCC VR-902B / DSM 19102 / 434/Bu</strain>
    </source>
</reference>
<feature type="chain" id="PRO_1000127948" description="Small ribosomal subunit protein uS19">
    <location>
        <begin position="1"/>
        <end position="88"/>
    </location>
</feature>
<dbReference type="EMBL" id="AM884176">
    <property type="protein sequence ID" value="CAP04224.1"/>
    <property type="molecule type" value="Genomic_DNA"/>
</dbReference>
<dbReference type="RefSeq" id="WP_009871888.1">
    <property type="nucleotide sequence ID" value="NC_010287.1"/>
</dbReference>
<dbReference type="RefSeq" id="YP_001654857.1">
    <property type="nucleotide sequence ID" value="NC_010287.1"/>
</dbReference>
<dbReference type="SMR" id="B0B898"/>
<dbReference type="GeneID" id="93065363"/>
<dbReference type="KEGG" id="ctb:CTL0786"/>
<dbReference type="PATRIC" id="fig|471472.4.peg.842"/>
<dbReference type="HOGENOM" id="CLU_144911_0_1_0"/>
<dbReference type="PRO" id="PR:B0B898"/>
<dbReference type="Proteomes" id="UP001154402">
    <property type="component" value="Chromosome"/>
</dbReference>
<dbReference type="GO" id="GO:0005737">
    <property type="term" value="C:cytoplasm"/>
    <property type="evidence" value="ECO:0007669"/>
    <property type="project" value="UniProtKB-ARBA"/>
</dbReference>
<dbReference type="GO" id="GO:0015935">
    <property type="term" value="C:small ribosomal subunit"/>
    <property type="evidence" value="ECO:0007669"/>
    <property type="project" value="InterPro"/>
</dbReference>
<dbReference type="GO" id="GO:0019843">
    <property type="term" value="F:rRNA binding"/>
    <property type="evidence" value="ECO:0007669"/>
    <property type="project" value="UniProtKB-UniRule"/>
</dbReference>
<dbReference type="GO" id="GO:0003735">
    <property type="term" value="F:structural constituent of ribosome"/>
    <property type="evidence" value="ECO:0007669"/>
    <property type="project" value="InterPro"/>
</dbReference>
<dbReference type="GO" id="GO:0000028">
    <property type="term" value="P:ribosomal small subunit assembly"/>
    <property type="evidence" value="ECO:0007669"/>
    <property type="project" value="TreeGrafter"/>
</dbReference>
<dbReference type="GO" id="GO:0006412">
    <property type="term" value="P:translation"/>
    <property type="evidence" value="ECO:0007669"/>
    <property type="project" value="UniProtKB-UniRule"/>
</dbReference>
<dbReference type="FunFam" id="3.30.860.10:FF:000001">
    <property type="entry name" value="30S ribosomal protein S19"/>
    <property type="match status" value="1"/>
</dbReference>
<dbReference type="Gene3D" id="3.30.860.10">
    <property type="entry name" value="30s Ribosomal Protein S19, Chain A"/>
    <property type="match status" value="1"/>
</dbReference>
<dbReference type="HAMAP" id="MF_00531">
    <property type="entry name" value="Ribosomal_uS19"/>
    <property type="match status" value="1"/>
</dbReference>
<dbReference type="InterPro" id="IPR002222">
    <property type="entry name" value="Ribosomal_uS19"/>
</dbReference>
<dbReference type="InterPro" id="IPR005732">
    <property type="entry name" value="Ribosomal_uS19_bac-type"/>
</dbReference>
<dbReference type="InterPro" id="IPR020934">
    <property type="entry name" value="Ribosomal_uS19_CS"/>
</dbReference>
<dbReference type="InterPro" id="IPR023575">
    <property type="entry name" value="Ribosomal_uS19_SF"/>
</dbReference>
<dbReference type="NCBIfam" id="TIGR01050">
    <property type="entry name" value="rpsS_bact"/>
    <property type="match status" value="1"/>
</dbReference>
<dbReference type="PANTHER" id="PTHR11880">
    <property type="entry name" value="RIBOSOMAL PROTEIN S19P FAMILY MEMBER"/>
    <property type="match status" value="1"/>
</dbReference>
<dbReference type="PANTHER" id="PTHR11880:SF8">
    <property type="entry name" value="SMALL RIBOSOMAL SUBUNIT PROTEIN US19M"/>
    <property type="match status" value="1"/>
</dbReference>
<dbReference type="Pfam" id="PF00203">
    <property type="entry name" value="Ribosomal_S19"/>
    <property type="match status" value="1"/>
</dbReference>
<dbReference type="PIRSF" id="PIRSF002144">
    <property type="entry name" value="Ribosomal_S19"/>
    <property type="match status" value="1"/>
</dbReference>
<dbReference type="PRINTS" id="PR00975">
    <property type="entry name" value="RIBOSOMALS19"/>
</dbReference>
<dbReference type="SUPFAM" id="SSF54570">
    <property type="entry name" value="Ribosomal protein S19"/>
    <property type="match status" value="1"/>
</dbReference>
<dbReference type="PROSITE" id="PS00323">
    <property type="entry name" value="RIBOSOMAL_S19"/>
    <property type="match status" value="1"/>
</dbReference>
<name>RS19_CHLT2</name>
<proteinExistence type="inferred from homology"/>